<comment type="function">
    <text evidence="1">Removes the pyruvyl group from chorismate, with concomitant aromatization of the ring, to provide 4-hydroxybenzoate (4HB) for the ubiquinone pathway.</text>
</comment>
<comment type="catalytic activity">
    <reaction evidence="1">
        <text>chorismate = 4-hydroxybenzoate + pyruvate</text>
        <dbReference type="Rhea" id="RHEA:16505"/>
        <dbReference type="ChEBI" id="CHEBI:15361"/>
        <dbReference type="ChEBI" id="CHEBI:17879"/>
        <dbReference type="ChEBI" id="CHEBI:29748"/>
        <dbReference type="EC" id="4.1.3.40"/>
    </reaction>
</comment>
<comment type="pathway">
    <text evidence="1">Cofactor biosynthesis; ubiquinone biosynthesis.</text>
</comment>
<comment type="subcellular location">
    <subcellularLocation>
        <location evidence="1">Cytoplasm</location>
    </subcellularLocation>
</comment>
<comment type="similarity">
    <text evidence="1">Belongs to the UbiC family.</text>
</comment>
<organism>
    <name type="scientific">Hydrogenovibrio crunogenus (strain DSM 25203 / XCL-2)</name>
    <name type="common">Thiomicrospira crunogena</name>
    <dbReference type="NCBI Taxonomy" id="317025"/>
    <lineage>
        <taxon>Bacteria</taxon>
        <taxon>Pseudomonadati</taxon>
        <taxon>Pseudomonadota</taxon>
        <taxon>Gammaproteobacteria</taxon>
        <taxon>Thiotrichales</taxon>
        <taxon>Piscirickettsiaceae</taxon>
        <taxon>Hydrogenovibrio</taxon>
    </lineage>
</organism>
<gene>
    <name evidence="1" type="primary">ubiC</name>
    <name type="ordered locus">Tcr_2154</name>
</gene>
<reference key="1">
    <citation type="journal article" date="2006" name="PLoS Biol.">
        <title>The genome of deep-sea vent chemolithoautotroph Thiomicrospira crunogena XCL-2.</title>
        <authorList>
            <person name="Scott K.M."/>
            <person name="Sievert S.M."/>
            <person name="Abril F.N."/>
            <person name="Ball L.A."/>
            <person name="Barrett C.J."/>
            <person name="Blake R.A."/>
            <person name="Boller A.J."/>
            <person name="Chain P.S.G."/>
            <person name="Clark J.A."/>
            <person name="Davis C.R."/>
            <person name="Detter C."/>
            <person name="Do K.F."/>
            <person name="Dobrinski K.P."/>
            <person name="Faza B.I."/>
            <person name="Fitzpatrick K.A."/>
            <person name="Freyermuth S.K."/>
            <person name="Harmer T.L."/>
            <person name="Hauser L.J."/>
            <person name="Huegler M."/>
            <person name="Kerfeld C.A."/>
            <person name="Klotz M.G."/>
            <person name="Kong W.W."/>
            <person name="Land M."/>
            <person name="Lapidus A."/>
            <person name="Larimer F.W."/>
            <person name="Longo D.L."/>
            <person name="Lucas S."/>
            <person name="Malfatti S.A."/>
            <person name="Massey S.E."/>
            <person name="Martin D.D."/>
            <person name="McCuddin Z."/>
            <person name="Meyer F."/>
            <person name="Moore J.L."/>
            <person name="Ocampo L.H. Jr."/>
            <person name="Paul J.H."/>
            <person name="Paulsen I.T."/>
            <person name="Reep D.K."/>
            <person name="Ren Q."/>
            <person name="Ross R.L."/>
            <person name="Sato P.Y."/>
            <person name="Thomas P."/>
            <person name="Tinkham L.E."/>
            <person name="Zeruth G.T."/>
        </authorList>
    </citation>
    <scope>NUCLEOTIDE SEQUENCE [LARGE SCALE GENOMIC DNA]</scope>
    <source>
        <strain>DSM 25203 / XCL-2</strain>
    </source>
</reference>
<accession>Q31DN1</accession>
<protein>
    <recommendedName>
        <fullName evidence="1">Probable chorismate pyruvate-lyase</fullName>
        <shortName evidence="1">CL</shortName>
        <shortName evidence="1">CPL</shortName>
        <ecNumber evidence="1">4.1.3.40</ecNumber>
    </recommendedName>
</protein>
<name>UBIC_HYDCU</name>
<feature type="chain" id="PRO_0000240579" description="Probable chorismate pyruvate-lyase">
    <location>
        <begin position="1"/>
        <end position="185"/>
    </location>
</feature>
<feature type="binding site" evidence="1">
    <location>
        <position position="84"/>
    </location>
    <ligand>
        <name>substrate</name>
    </ligand>
</feature>
<feature type="binding site" evidence="1">
    <location>
        <position position="122"/>
    </location>
    <ligand>
        <name>substrate</name>
    </ligand>
</feature>
<feature type="binding site" evidence="1">
    <location>
        <position position="178"/>
    </location>
    <ligand>
        <name>substrate</name>
    </ligand>
</feature>
<proteinExistence type="inferred from homology"/>
<sequence>MLKPSRTHLTLRHEPHWIPAGLIHRLKSPRQLHDWLLDSSSLTAKIRIGCPEMDVRILSETYEKPLISEAHHLKIPLSQKTWIRCVFLMCNGQPIVYARTVIPYWKTGNPWYALKHLGNRPLGEVLFQLPNLKRTPFQITQTHAQNWPHLDLEDSKQIKTFARKSTFIQGKYPLLLTEAFIESSL</sequence>
<keyword id="KW-0963">Cytoplasm</keyword>
<keyword id="KW-0456">Lyase</keyword>
<keyword id="KW-0670">Pyruvate</keyword>
<keyword id="KW-0831">Ubiquinone biosynthesis</keyword>
<dbReference type="EC" id="4.1.3.40" evidence="1"/>
<dbReference type="EMBL" id="CP000109">
    <property type="protein sequence ID" value="ABB42742.1"/>
    <property type="molecule type" value="Genomic_DNA"/>
</dbReference>
<dbReference type="SMR" id="Q31DN1"/>
<dbReference type="STRING" id="317025.Tcr_2154"/>
<dbReference type="KEGG" id="tcx:Tcr_2154"/>
<dbReference type="eggNOG" id="COG3161">
    <property type="taxonomic scope" value="Bacteria"/>
</dbReference>
<dbReference type="HOGENOM" id="CLU_096824_2_0_6"/>
<dbReference type="OrthoDB" id="9789493at2"/>
<dbReference type="UniPathway" id="UPA00232"/>
<dbReference type="GO" id="GO:0005829">
    <property type="term" value="C:cytosol"/>
    <property type="evidence" value="ECO:0007669"/>
    <property type="project" value="TreeGrafter"/>
</dbReference>
<dbReference type="GO" id="GO:0008813">
    <property type="term" value="F:chorismate lyase activity"/>
    <property type="evidence" value="ECO:0007669"/>
    <property type="project" value="UniProtKB-UniRule"/>
</dbReference>
<dbReference type="GO" id="GO:0042866">
    <property type="term" value="P:pyruvate biosynthetic process"/>
    <property type="evidence" value="ECO:0007669"/>
    <property type="project" value="UniProtKB-UniRule"/>
</dbReference>
<dbReference type="GO" id="GO:0006744">
    <property type="term" value="P:ubiquinone biosynthetic process"/>
    <property type="evidence" value="ECO:0007669"/>
    <property type="project" value="UniProtKB-UniRule"/>
</dbReference>
<dbReference type="Gene3D" id="3.40.1410.10">
    <property type="entry name" value="Chorismate lyase-like"/>
    <property type="match status" value="1"/>
</dbReference>
<dbReference type="HAMAP" id="MF_01632">
    <property type="entry name" value="UbiC"/>
    <property type="match status" value="1"/>
</dbReference>
<dbReference type="InterPro" id="IPR007440">
    <property type="entry name" value="Chorismate--pyruvate_lyase"/>
</dbReference>
<dbReference type="InterPro" id="IPR028978">
    <property type="entry name" value="Chorismate_lyase_/UTRA_dom_sf"/>
</dbReference>
<dbReference type="PANTHER" id="PTHR38683">
    <property type="entry name" value="CHORISMATE PYRUVATE-LYASE"/>
    <property type="match status" value="1"/>
</dbReference>
<dbReference type="PANTHER" id="PTHR38683:SF1">
    <property type="entry name" value="CHORISMATE PYRUVATE-LYASE"/>
    <property type="match status" value="1"/>
</dbReference>
<dbReference type="Pfam" id="PF04345">
    <property type="entry name" value="Chor_lyase"/>
    <property type="match status" value="1"/>
</dbReference>
<dbReference type="SUPFAM" id="SSF64288">
    <property type="entry name" value="Chorismate lyase-like"/>
    <property type="match status" value="1"/>
</dbReference>
<evidence type="ECO:0000255" key="1">
    <source>
        <dbReference type="HAMAP-Rule" id="MF_01632"/>
    </source>
</evidence>